<reference key="1">
    <citation type="journal article" date="1995" name="J. Bacteriol.">
        <title>A mutation in the Neisseria gonorrhoeae rfaD homolog results in altered lipooligosaccharide expression.</title>
        <authorList>
            <person name="Drazek E.S."/>
            <person name="Stein D.C."/>
            <person name="Deal C.D."/>
        </authorList>
    </citation>
    <scope>NUCLEOTIDE SEQUENCE [GENOMIC DNA]</scope>
    <source>
        <strain>MS11 / B2</strain>
    </source>
</reference>
<feature type="chain" id="PRO_0000205800" description="ADP-L-glycero-D-manno-heptose-6-epimerase">
    <location>
        <begin position="1"/>
        <end position="334"/>
    </location>
</feature>
<feature type="active site" description="Proton acceptor" evidence="1">
    <location>
        <position position="141"/>
    </location>
</feature>
<feature type="active site" description="Proton acceptor" evidence="1">
    <location>
        <position position="180"/>
    </location>
</feature>
<feature type="binding site" evidence="1">
    <location>
        <begin position="11"/>
        <end position="12"/>
    </location>
    <ligand>
        <name>NADP(+)</name>
        <dbReference type="ChEBI" id="CHEBI:58349"/>
    </ligand>
</feature>
<feature type="binding site" evidence="1">
    <location>
        <begin position="32"/>
        <end position="33"/>
    </location>
    <ligand>
        <name>NADP(+)</name>
        <dbReference type="ChEBI" id="CHEBI:58349"/>
    </ligand>
</feature>
<feature type="binding site" evidence="1">
    <location>
        <position position="39"/>
    </location>
    <ligand>
        <name>NADP(+)</name>
        <dbReference type="ChEBI" id="CHEBI:58349"/>
    </ligand>
</feature>
<feature type="binding site" evidence="1">
    <location>
        <position position="54"/>
    </location>
    <ligand>
        <name>NADP(+)</name>
        <dbReference type="ChEBI" id="CHEBI:58349"/>
    </ligand>
</feature>
<feature type="binding site" evidence="1">
    <location>
        <begin position="77"/>
        <end position="81"/>
    </location>
    <ligand>
        <name>NADP(+)</name>
        <dbReference type="ChEBI" id="CHEBI:58349"/>
    </ligand>
</feature>
<feature type="binding site" evidence="1">
    <location>
        <position position="94"/>
    </location>
    <ligand>
        <name>NADP(+)</name>
        <dbReference type="ChEBI" id="CHEBI:58349"/>
    </ligand>
</feature>
<feature type="binding site" evidence="1">
    <location>
        <position position="145"/>
    </location>
    <ligand>
        <name>NADP(+)</name>
        <dbReference type="ChEBI" id="CHEBI:58349"/>
    </ligand>
</feature>
<feature type="binding site" evidence="1">
    <location>
        <position position="171"/>
    </location>
    <ligand>
        <name>substrate</name>
    </ligand>
</feature>
<feature type="binding site" evidence="1">
    <location>
        <position position="172"/>
    </location>
    <ligand>
        <name>NADP(+)</name>
        <dbReference type="ChEBI" id="CHEBI:58349"/>
    </ligand>
</feature>
<feature type="binding site" evidence="1">
    <location>
        <position position="180"/>
    </location>
    <ligand>
        <name>NADP(+)</name>
        <dbReference type="ChEBI" id="CHEBI:58349"/>
    </ligand>
</feature>
<feature type="binding site" evidence="1">
    <location>
        <position position="182"/>
    </location>
    <ligand>
        <name>substrate</name>
    </ligand>
</feature>
<feature type="binding site" evidence="1">
    <location>
        <position position="189"/>
    </location>
    <ligand>
        <name>substrate</name>
    </ligand>
</feature>
<feature type="binding site" evidence="1">
    <location>
        <begin position="203"/>
        <end position="206"/>
    </location>
    <ligand>
        <name>substrate</name>
    </ligand>
</feature>
<feature type="binding site" evidence="1">
    <location>
        <position position="216"/>
    </location>
    <ligand>
        <name>substrate</name>
    </ligand>
</feature>
<feature type="binding site" evidence="1">
    <location>
        <position position="295"/>
    </location>
    <ligand>
        <name>substrate</name>
    </ligand>
</feature>
<keyword id="KW-0119">Carbohydrate metabolism</keyword>
<keyword id="KW-0413">Isomerase</keyword>
<keyword id="KW-0521">NADP</keyword>
<comment type="function">
    <text evidence="1">Catalyzes the interconversion between ADP-D-glycero-beta-D-manno-heptose and ADP-L-glycero-beta-D-manno-heptose via an epimerization at carbon 6 of the heptose.</text>
</comment>
<comment type="catalytic activity">
    <reaction evidence="1">
        <text>ADP-D-glycero-beta-D-manno-heptose = ADP-L-glycero-beta-D-manno-heptose</text>
        <dbReference type="Rhea" id="RHEA:17577"/>
        <dbReference type="ChEBI" id="CHEBI:59967"/>
        <dbReference type="ChEBI" id="CHEBI:61506"/>
        <dbReference type="EC" id="5.1.3.20"/>
    </reaction>
</comment>
<comment type="cofactor">
    <cofactor evidence="1">
        <name>NADP(+)</name>
        <dbReference type="ChEBI" id="CHEBI:58349"/>
    </cofactor>
    <text evidence="1">Binds 1 NADP(+) per subunit.</text>
</comment>
<comment type="pathway">
    <text evidence="1">Nucleotide-sugar biosynthesis; ADP-L-glycero-beta-D-manno-heptose biosynthesis; ADP-L-glycero-beta-D-manno-heptose from D-glycero-beta-D-manno-heptose 7-phosphate: step 4/4.</text>
</comment>
<comment type="pathway">
    <text>Bacterial outer membrane biogenesis; LOS core biosynthesis.</text>
</comment>
<comment type="subunit">
    <text evidence="1">Homopentamer.</text>
</comment>
<comment type="domain">
    <text evidence="1">Contains a large N-terminal NADP-binding domain, and a smaller C-terminal substrate-binding domain.</text>
</comment>
<comment type="similarity">
    <text evidence="1">Belongs to the NAD(P)-dependent epimerase/dehydratase family. HldD subfamily.</text>
</comment>
<sequence length="334" mass="38403">MTIIVTGAAGFIGSNIVKALNQRGITDIVAVDNLTKGEKFKNLAECEIAHYLDKHEFIRQVREHILPYQNIEAVFHQGACSDTMNHDGLYMMENNYQYTLDLLDWCQDERIPFLYASSAAVYGKGEIFREERELEKPLNVYGYSKFLFDQVLRRRMKEGLTAQVVGFRYFNVYGQHEQHKGRMASVAFHHFHQYREHGYVNLFGSNDGYGNGEQTRDFVSVEDVAKINLYFFDHPELSGIYNLGTGRSQQFNELAAATVNACRAAEGKSELSLKELVEEELIRYIPFPDALKGKYQGFTQADITKLREAGYKEEFFDVKAGVNRYVKWMLENLA</sequence>
<protein>
    <recommendedName>
        <fullName evidence="1">ADP-L-glycero-D-manno-heptose-6-epimerase</fullName>
        <ecNumber evidence="1">5.1.3.20</ecNumber>
    </recommendedName>
    <alternativeName>
        <fullName evidence="1">ADP-L-glycero-beta-D-manno-heptose-6-epimerase</fullName>
        <shortName evidence="1">ADP-glyceromanno-heptose 6-epimerase</shortName>
        <shortName evidence="1">ADP-hep 6-epimerase</shortName>
        <shortName evidence="1">AGME</shortName>
    </alternativeName>
</protein>
<proteinExistence type="inferred from homology"/>
<name>HLDD_NEIGO</name>
<accession>Q51061</accession>
<dbReference type="EC" id="5.1.3.20" evidence="1"/>
<dbReference type="EMBL" id="L07845">
    <property type="protein sequence ID" value="AAA79173.1"/>
    <property type="molecule type" value="Genomic_DNA"/>
</dbReference>
<dbReference type="SMR" id="Q51061"/>
<dbReference type="PATRIC" id="fig|485.42.peg.78"/>
<dbReference type="UniPathway" id="UPA00356">
    <property type="reaction ID" value="UER00440"/>
</dbReference>
<dbReference type="UniPathway" id="UPA00976"/>
<dbReference type="GO" id="GO:0008712">
    <property type="term" value="F:ADP-glyceromanno-heptose 6-epimerase activity"/>
    <property type="evidence" value="ECO:0007669"/>
    <property type="project" value="UniProtKB-UniRule"/>
</dbReference>
<dbReference type="GO" id="GO:0050661">
    <property type="term" value="F:NADP binding"/>
    <property type="evidence" value="ECO:0007669"/>
    <property type="project" value="InterPro"/>
</dbReference>
<dbReference type="GO" id="GO:0097171">
    <property type="term" value="P:ADP-L-glycero-beta-D-manno-heptose biosynthetic process"/>
    <property type="evidence" value="ECO:0007669"/>
    <property type="project" value="UniProtKB-UniPathway"/>
</dbReference>
<dbReference type="GO" id="GO:0005975">
    <property type="term" value="P:carbohydrate metabolic process"/>
    <property type="evidence" value="ECO:0007669"/>
    <property type="project" value="UniProtKB-UniRule"/>
</dbReference>
<dbReference type="CDD" id="cd05248">
    <property type="entry name" value="ADP_GME_SDR_e"/>
    <property type="match status" value="1"/>
</dbReference>
<dbReference type="Gene3D" id="3.40.50.720">
    <property type="entry name" value="NAD(P)-binding Rossmann-like Domain"/>
    <property type="match status" value="1"/>
</dbReference>
<dbReference type="Gene3D" id="3.90.25.10">
    <property type="entry name" value="UDP-galactose 4-epimerase, domain 1"/>
    <property type="match status" value="1"/>
</dbReference>
<dbReference type="HAMAP" id="MF_01601">
    <property type="entry name" value="Heptose_epimerase"/>
    <property type="match status" value="1"/>
</dbReference>
<dbReference type="InterPro" id="IPR001509">
    <property type="entry name" value="Epimerase_deHydtase"/>
</dbReference>
<dbReference type="InterPro" id="IPR011912">
    <property type="entry name" value="Heptose_epim"/>
</dbReference>
<dbReference type="InterPro" id="IPR036291">
    <property type="entry name" value="NAD(P)-bd_dom_sf"/>
</dbReference>
<dbReference type="NCBIfam" id="TIGR02197">
    <property type="entry name" value="heptose_epim"/>
    <property type="match status" value="1"/>
</dbReference>
<dbReference type="PANTHER" id="PTHR43103:SF3">
    <property type="entry name" value="ADP-L-GLYCERO-D-MANNO-HEPTOSE-6-EPIMERASE"/>
    <property type="match status" value="1"/>
</dbReference>
<dbReference type="PANTHER" id="PTHR43103">
    <property type="entry name" value="NUCLEOSIDE-DIPHOSPHATE-SUGAR EPIMERASE"/>
    <property type="match status" value="1"/>
</dbReference>
<dbReference type="Pfam" id="PF01370">
    <property type="entry name" value="Epimerase"/>
    <property type="match status" value="1"/>
</dbReference>
<dbReference type="SUPFAM" id="SSF51735">
    <property type="entry name" value="NAD(P)-binding Rossmann-fold domains"/>
    <property type="match status" value="1"/>
</dbReference>
<evidence type="ECO:0000255" key="1">
    <source>
        <dbReference type="HAMAP-Rule" id="MF_01601"/>
    </source>
</evidence>
<organism>
    <name type="scientific">Neisseria gonorrhoeae</name>
    <dbReference type="NCBI Taxonomy" id="485"/>
    <lineage>
        <taxon>Bacteria</taxon>
        <taxon>Pseudomonadati</taxon>
        <taxon>Pseudomonadota</taxon>
        <taxon>Betaproteobacteria</taxon>
        <taxon>Neisseriales</taxon>
        <taxon>Neisseriaceae</taxon>
        <taxon>Neisseria</taxon>
    </lineage>
</organism>
<gene>
    <name evidence="1" type="primary">hldD</name>
    <name type="synonym">gme</name>
</gene>